<accession>P39649</accession>
<reference key="1">
    <citation type="journal article" date="1993" name="Mol. Microbiol.">
        <title>Bacillus subtilis genome project: cloning and sequencing of the 97 kb region from 325 degrees to 333 degrees.</title>
        <authorList>
            <person name="Glaser P."/>
            <person name="Kunst F."/>
            <person name="Arnaud M."/>
            <person name="Coudart M.P."/>
            <person name="Gonzales W."/>
            <person name="Hullo M.-F."/>
            <person name="Ionescu M."/>
            <person name="Lubochinsky B."/>
            <person name="Marcelino L."/>
            <person name="Moszer I."/>
            <person name="Presecan E."/>
            <person name="Santana M."/>
            <person name="Schneider E."/>
            <person name="Schweizer J."/>
            <person name="Vertes A."/>
            <person name="Rapoport G."/>
            <person name="Danchin A."/>
        </authorList>
    </citation>
    <scope>NUCLEOTIDE SEQUENCE [GENOMIC DNA]</scope>
    <source>
        <strain>168</strain>
    </source>
</reference>
<reference key="2">
    <citation type="journal article" date="1997" name="Nature">
        <title>The complete genome sequence of the Gram-positive bacterium Bacillus subtilis.</title>
        <authorList>
            <person name="Kunst F."/>
            <person name="Ogasawara N."/>
            <person name="Moszer I."/>
            <person name="Albertini A.M."/>
            <person name="Alloni G."/>
            <person name="Azevedo V."/>
            <person name="Bertero M.G."/>
            <person name="Bessieres P."/>
            <person name="Bolotin A."/>
            <person name="Borchert S."/>
            <person name="Borriss R."/>
            <person name="Boursier L."/>
            <person name="Brans A."/>
            <person name="Braun M."/>
            <person name="Brignell S.C."/>
            <person name="Bron S."/>
            <person name="Brouillet S."/>
            <person name="Bruschi C.V."/>
            <person name="Caldwell B."/>
            <person name="Capuano V."/>
            <person name="Carter N.M."/>
            <person name="Choi S.-K."/>
            <person name="Codani J.-J."/>
            <person name="Connerton I.F."/>
            <person name="Cummings N.J."/>
            <person name="Daniel R.A."/>
            <person name="Denizot F."/>
            <person name="Devine K.M."/>
            <person name="Duesterhoeft A."/>
            <person name="Ehrlich S.D."/>
            <person name="Emmerson P.T."/>
            <person name="Entian K.-D."/>
            <person name="Errington J."/>
            <person name="Fabret C."/>
            <person name="Ferrari E."/>
            <person name="Foulger D."/>
            <person name="Fritz C."/>
            <person name="Fujita M."/>
            <person name="Fujita Y."/>
            <person name="Fuma S."/>
            <person name="Galizzi A."/>
            <person name="Galleron N."/>
            <person name="Ghim S.-Y."/>
            <person name="Glaser P."/>
            <person name="Goffeau A."/>
            <person name="Golightly E.J."/>
            <person name="Grandi G."/>
            <person name="Guiseppi G."/>
            <person name="Guy B.J."/>
            <person name="Haga K."/>
            <person name="Haiech J."/>
            <person name="Harwood C.R."/>
            <person name="Henaut A."/>
            <person name="Hilbert H."/>
            <person name="Holsappel S."/>
            <person name="Hosono S."/>
            <person name="Hullo M.-F."/>
            <person name="Itaya M."/>
            <person name="Jones L.-M."/>
            <person name="Joris B."/>
            <person name="Karamata D."/>
            <person name="Kasahara Y."/>
            <person name="Klaerr-Blanchard M."/>
            <person name="Klein C."/>
            <person name="Kobayashi Y."/>
            <person name="Koetter P."/>
            <person name="Koningstein G."/>
            <person name="Krogh S."/>
            <person name="Kumano M."/>
            <person name="Kurita K."/>
            <person name="Lapidus A."/>
            <person name="Lardinois S."/>
            <person name="Lauber J."/>
            <person name="Lazarevic V."/>
            <person name="Lee S.-M."/>
            <person name="Levine A."/>
            <person name="Liu H."/>
            <person name="Masuda S."/>
            <person name="Mauel C."/>
            <person name="Medigue C."/>
            <person name="Medina N."/>
            <person name="Mellado R.P."/>
            <person name="Mizuno M."/>
            <person name="Moestl D."/>
            <person name="Nakai S."/>
            <person name="Noback M."/>
            <person name="Noone D."/>
            <person name="O'Reilly M."/>
            <person name="Ogawa K."/>
            <person name="Ogiwara A."/>
            <person name="Oudega B."/>
            <person name="Park S.-H."/>
            <person name="Parro V."/>
            <person name="Pohl T.M."/>
            <person name="Portetelle D."/>
            <person name="Porwollik S."/>
            <person name="Prescott A.M."/>
            <person name="Presecan E."/>
            <person name="Pujic P."/>
            <person name="Purnelle B."/>
            <person name="Rapoport G."/>
            <person name="Rey M."/>
            <person name="Reynolds S."/>
            <person name="Rieger M."/>
            <person name="Rivolta C."/>
            <person name="Rocha E."/>
            <person name="Roche B."/>
            <person name="Rose M."/>
            <person name="Sadaie Y."/>
            <person name="Sato T."/>
            <person name="Scanlan E."/>
            <person name="Schleich S."/>
            <person name="Schroeter R."/>
            <person name="Scoffone F."/>
            <person name="Sekiguchi J."/>
            <person name="Sekowska A."/>
            <person name="Seror S.J."/>
            <person name="Serror P."/>
            <person name="Shin B.-S."/>
            <person name="Soldo B."/>
            <person name="Sorokin A."/>
            <person name="Tacconi E."/>
            <person name="Takagi T."/>
            <person name="Takahashi H."/>
            <person name="Takemaru K."/>
            <person name="Takeuchi M."/>
            <person name="Tamakoshi A."/>
            <person name="Tanaka T."/>
            <person name="Terpstra P."/>
            <person name="Tognoni A."/>
            <person name="Tosato V."/>
            <person name="Uchiyama S."/>
            <person name="Vandenbol M."/>
            <person name="Vannier F."/>
            <person name="Vassarotti A."/>
            <person name="Viari A."/>
            <person name="Wambutt R."/>
            <person name="Wedler E."/>
            <person name="Wedler H."/>
            <person name="Weitzenegger T."/>
            <person name="Winters P."/>
            <person name="Wipat A."/>
            <person name="Yamamoto H."/>
            <person name="Yamane K."/>
            <person name="Yasumoto K."/>
            <person name="Yata K."/>
            <person name="Yoshida K."/>
            <person name="Yoshikawa H.-F."/>
            <person name="Zumstein E."/>
            <person name="Yoshikawa H."/>
            <person name="Danchin A."/>
        </authorList>
    </citation>
    <scope>NUCLEOTIDE SEQUENCE [LARGE SCALE GENOMIC DNA]</scope>
    <source>
        <strain>168</strain>
    </source>
</reference>
<dbReference type="EMBL" id="X73124">
    <property type="protein sequence ID" value="CAA51647.1"/>
    <property type="molecule type" value="Genomic_DNA"/>
</dbReference>
<dbReference type="EMBL" id="AL009126">
    <property type="protein sequence ID" value="CAB15790.1"/>
    <property type="molecule type" value="Genomic_DNA"/>
</dbReference>
<dbReference type="PIR" id="S39746">
    <property type="entry name" value="S39746"/>
</dbReference>
<dbReference type="RefSeq" id="NP_391643.1">
    <property type="nucleotide sequence ID" value="NC_000964.3"/>
</dbReference>
<dbReference type="RefSeq" id="WP_003242581.1">
    <property type="nucleotide sequence ID" value="NZ_OZ025638.1"/>
</dbReference>
<dbReference type="SMR" id="P39649"/>
<dbReference type="FunCoup" id="P39649">
    <property type="interactions" value="21"/>
</dbReference>
<dbReference type="STRING" id="224308.BSU37630"/>
<dbReference type="TCDB" id="2.A.7.3.4">
    <property type="family name" value="the drug/metabolite transporter (dmt) superfamily"/>
</dbReference>
<dbReference type="PaxDb" id="224308-BSU37630"/>
<dbReference type="EnsemblBacteria" id="CAB15790">
    <property type="protein sequence ID" value="CAB15790"/>
    <property type="gene ID" value="BSU_37630"/>
</dbReference>
<dbReference type="GeneID" id="937972"/>
<dbReference type="KEGG" id="bsu:BSU37630"/>
<dbReference type="PATRIC" id="fig|224308.179.peg.4075"/>
<dbReference type="eggNOG" id="COG0697">
    <property type="taxonomic scope" value="Bacteria"/>
</dbReference>
<dbReference type="InParanoid" id="P39649"/>
<dbReference type="OrthoDB" id="9787117at2"/>
<dbReference type="PhylomeDB" id="P39649"/>
<dbReference type="BioCyc" id="BSUB:BSU37630-MONOMER"/>
<dbReference type="Proteomes" id="UP000001570">
    <property type="component" value="Chromosome"/>
</dbReference>
<dbReference type="GO" id="GO:0016020">
    <property type="term" value="C:membrane"/>
    <property type="evidence" value="ECO:0000318"/>
    <property type="project" value="GO_Central"/>
</dbReference>
<dbReference type="GO" id="GO:0005886">
    <property type="term" value="C:plasma membrane"/>
    <property type="evidence" value="ECO:0007669"/>
    <property type="project" value="UniProtKB-SubCell"/>
</dbReference>
<dbReference type="Gene3D" id="1.10.3730.20">
    <property type="match status" value="1"/>
</dbReference>
<dbReference type="InterPro" id="IPR050638">
    <property type="entry name" value="AA-Vitamin_Transporters"/>
</dbReference>
<dbReference type="InterPro" id="IPR004779">
    <property type="entry name" value="CO/AA/NH_transpt"/>
</dbReference>
<dbReference type="InterPro" id="IPR000620">
    <property type="entry name" value="EamA_dom"/>
</dbReference>
<dbReference type="NCBIfam" id="TIGR00950">
    <property type="entry name" value="2A78"/>
    <property type="match status" value="1"/>
</dbReference>
<dbReference type="PANTHER" id="PTHR32322:SF2">
    <property type="entry name" value="EAMA DOMAIN-CONTAINING PROTEIN"/>
    <property type="match status" value="1"/>
</dbReference>
<dbReference type="PANTHER" id="PTHR32322">
    <property type="entry name" value="INNER MEMBRANE TRANSPORTER"/>
    <property type="match status" value="1"/>
</dbReference>
<dbReference type="Pfam" id="PF00892">
    <property type="entry name" value="EamA"/>
    <property type="match status" value="2"/>
</dbReference>
<dbReference type="SUPFAM" id="SSF103481">
    <property type="entry name" value="Multidrug resistance efflux transporter EmrE"/>
    <property type="match status" value="2"/>
</dbReference>
<keyword id="KW-1003">Cell membrane</keyword>
<keyword id="KW-0472">Membrane</keyword>
<keyword id="KW-1185">Reference proteome</keyword>
<keyword id="KW-0677">Repeat</keyword>
<keyword id="KW-0812">Transmembrane</keyword>
<keyword id="KW-1133">Transmembrane helix</keyword>
<keyword id="KW-0813">Transport</keyword>
<name>YWFM_BACSU</name>
<sequence length="296" mass="31345">MKGNIYSLFVLIAAFFWGTTGTVQALAPESATPLAFGAFRLLIGGSAMLLAVWISRELHVKNWAWPLVFLAAVCMACYQPLFFTAVKETGIAVGTVIAIGSAPIIAGTLEWAVLKKRPRNSWWIATVLALAGCWLLFSDSSNVRIDVAGVLMALGAGASFAGYTLISKAMMKTQPPRATSAVVFMISAILLTPLLWQLDISWILTPRGLGTSLYIGLIATCAAYFLFAKGLTGVPASAAVTLSLAEPLTASLLGVFFIGEMLSPSSWLGIALMMLGLLVISAAPRKQKTAEAAHMS</sequence>
<proteinExistence type="inferred from homology"/>
<organism>
    <name type="scientific">Bacillus subtilis (strain 168)</name>
    <dbReference type="NCBI Taxonomy" id="224308"/>
    <lineage>
        <taxon>Bacteria</taxon>
        <taxon>Bacillati</taxon>
        <taxon>Bacillota</taxon>
        <taxon>Bacilli</taxon>
        <taxon>Bacillales</taxon>
        <taxon>Bacillaceae</taxon>
        <taxon>Bacillus</taxon>
    </lineage>
</organism>
<protein>
    <recommendedName>
        <fullName>Uncharacterized transporter YwfM</fullName>
    </recommendedName>
</protein>
<feature type="chain" id="PRO_0000108186" description="Uncharacterized transporter YwfM">
    <location>
        <begin position="1"/>
        <end position="296"/>
    </location>
</feature>
<feature type="transmembrane region" description="Helical" evidence="1">
    <location>
        <begin position="8"/>
        <end position="28"/>
    </location>
</feature>
<feature type="transmembrane region" description="Helical" evidence="1">
    <location>
        <begin position="34"/>
        <end position="54"/>
    </location>
</feature>
<feature type="transmembrane region" description="Helical" evidence="1">
    <location>
        <begin position="63"/>
        <end position="83"/>
    </location>
</feature>
<feature type="transmembrane region" description="Helical" evidence="1">
    <location>
        <begin position="89"/>
        <end position="109"/>
    </location>
</feature>
<feature type="transmembrane region" description="Helical" evidence="1">
    <location>
        <begin position="121"/>
        <end position="141"/>
    </location>
</feature>
<feature type="transmembrane region" description="Helical" evidence="1">
    <location>
        <begin position="147"/>
        <end position="167"/>
    </location>
</feature>
<feature type="transmembrane region" description="Helical" evidence="1">
    <location>
        <begin position="183"/>
        <end position="203"/>
    </location>
</feature>
<feature type="transmembrane region" description="Helical" evidence="1">
    <location>
        <begin position="208"/>
        <end position="228"/>
    </location>
</feature>
<feature type="transmembrane region" description="Helical" evidence="1">
    <location>
        <begin position="238"/>
        <end position="258"/>
    </location>
</feature>
<feature type="transmembrane region" description="Helical" evidence="1">
    <location>
        <begin position="261"/>
        <end position="281"/>
    </location>
</feature>
<feature type="domain" description="EamA 1">
    <location>
        <begin position="15"/>
        <end position="138"/>
    </location>
</feature>
<feature type="domain" description="EamA 2">
    <location>
        <begin position="158"/>
        <end position="282"/>
    </location>
</feature>
<comment type="subcellular location">
    <subcellularLocation>
        <location evidence="2">Cell membrane</location>
        <topology evidence="2">Multi-pass membrane protein</topology>
    </subcellularLocation>
</comment>
<comment type="similarity">
    <text evidence="2">Belongs to the EamA transporter family.</text>
</comment>
<gene>
    <name type="primary">ywfM</name>
    <name type="ordered locus">BSU37630</name>
    <name type="ORF">ipa-91d</name>
</gene>
<evidence type="ECO:0000255" key="1"/>
<evidence type="ECO:0000305" key="2"/>